<reference key="1">
    <citation type="journal article" date="2001" name="Science">
        <title>The genome of the natural genetic engineer Agrobacterium tumefaciens C58.</title>
        <authorList>
            <person name="Wood D.W."/>
            <person name="Setubal J.C."/>
            <person name="Kaul R."/>
            <person name="Monks D.E."/>
            <person name="Kitajima J.P."/>
            <person name="Okura V.K."/>
            <person name="Zhou Y."/>
            <person name="Chen L."/>
            <person name="Wood G.E."/>
            <person name="Almeida N.F. Jr."/>
            <person name="Woo L."/>
            <person name="Chen Y."/>
            <person name="Paulsen I.T."/>
            <person name="Eisen J.A."/>
            <person name="Karp P.D."/>
            <person name="Bovee D. Sr."/>
            <person name="Chapman P."/>
            <person name="Clendenning J."/>
            <person name="Deatherage G."/>
            <person name="Gillet W."/>
            <person name="Grant C."/>
            <person name="Kutyavin T."/>
            <person name="Levy R."/>
            <person name="Li M.-J."/>
            <person name="McClelland E."/>
            <person name="Palmieri A."/>
            <person name="Raymond C."/>
            <person name="Rouse G."/>
            <person name="Saenphimmachak C."/>
            <person name="Wu Z."/>
            <person name="Romero P."/>
            <person name="Gordon D."/>
            <person name="Zhang S."/>
            <person name="Yoo H."/>
            <person name="Tao Y."/>
            <person name="Biddle P."/>
            <person name="Jung M."/>
            <person name="Krespan W."/>
            <person name="Perry M."/>
            <person name="Gordon-Kamm B."/>
            <person name="Liao L."/>
            <person name="Kim S."/>
            <person name="Hendrick C."/>
            <person name="Zhao Z.-Y."/>
            <person name="Dolan M."/>
            <person name="Chumley F."/>
            <person name="Tingey S.V."/>
            <person name="Tomb J.-F."/>
            <person name="Gordon M.P."/>
            <person name="Olson M.V."/>
            <person name="Nester E.W."/>
        </authorList>
    </citation>
    <scope>NUCLEOTIDE SEQUENCE [LARGE SCALE GENOMIC DNA]</scope>
    <source>
        <strain>C58 / ATCC 33970</strain>
    </source>
</reference>
<reference key="2">
    <citation type="journal article" date="2001" name="Science">
        <title>Genome sequence of the plant pathogen and biotechnology agent Agrobacterium tumefaciens C58.</title>
        <authorList>
            <person name="Goodner B."/>
            <person name="Hinkle G."/>
            <person name="Gattung S."/>
            <person name="Miller N."/>
            <person name="Blanchard M."/>
            <person name="Qurollo B."/>
            <person name="Goldman B.S."/>
            <person name="Cao Y."/>
            <person name="Askenazi M."/>
            <person name="Halling C."/>
            <person name="Mullin L."/>
            <person name="Houmiel K."/>
            <person name="Gordon J."/>
            <person name="Vaudin M."/>
            <person name="Iartchouk O."/>
            <person name="Epp A."/>
            <person name="Liu F."/>
            <person name="Wollam C."/>
            <person name="Allinger M."/>
            <person name="Doughty D."/>
            <person name="Scott C."/>
            <person name="Lappas C."/>
            <person name="Markelz B."/>
            <person name="Flanagan C."/>
            <person name="Crowell C."/>
            <person name="Gurson J."/>
            <person name="Lomo C."/>
            <person name="Sear C."/>
            <person name="Strub G."/>
            <person name="Cielo C."/>
            <person name="Slater S."/>
        </authorList>
    </citation>
    <scope>NUCLEOTIDE SEQUENCE [LARGE SCALE GENOMIC DNA]</scope>
    <source>
        <strain>C58 / ATCC 33970</strain>
    </source>
</reference>
<dbReference type="EMBL" id="AE007869">
    <property type="protein sequence ID" value="AAK86783.1"/>
    <property type="molecule type" value="Genomic_DNA"/>
</dbReference>
<dbReference type="PIR" id="AF2696">
    <property type="entry name" value="AF2696"/>
</dbReference>
<dbReference type="PIR" id="F97478">
    <property type="entry name" value="F97478"/>
</dbReference>
<dbReference type="RefSeq" id="NP_353998.1">
    <property type="nucleotide sequence ID" value="NC_003062.2"/>
</dbReference>
<dbReference type="RefSeq" id="WP_010971299.1">
    <property type="nucleotide sequence ID" value="NC_003062.2"/>
</dbReference>
<dbReference type="SMR" id="Q8UGR1"/>
<dbReference type="STRING" id="176299.Atu0974"/>
<dbReference type="EnsemblBacteria" id="AAK86783">
    <property type="protein sequence ID" value="AAK86783"/>
    <property type="gene ID" value="Atu0974"/>
</dbReference>
<dbReference type="GeneID" id="1133012"/>
<dbReference type="KEGG" id="atu:Atu0974"/>
<dbReference type="PATRIC" id="fig|176299.10.peg.985"/>
<dbReference type="eggNOG" id="COG2332">
    <property type="taxonomic scope" value="Bacteria"/>
</dbReference>
<dbReference type="HOGENOM" id="CLU_079503_1_1_5"/>
<dbReference type="OrthoDB" id="9793584at2"/>
<dbReference type="PhylomeDB" id="Q8UGR1"/>
<dbReference type="BioCyc" id="AGRO:ATU0974-MONOMER"/>
<dbReference type="Proteomes" id="UP000000813">
    <property type="component" value="Chromosome circular"/>
</dbReference>
<dbReference type="GO" id="GO:0005886">
    <property type="term" value="C:plasma membrane"/>
    <property type="evidence" value="ECO:0007669"/>
    <property type="project" value="UniProtKB-SubCell"/>
</dbReference>
<dbReference type="GO" id="GO:0020037">
    <property type="term" value="F:heme binding"/>
    <property type="evidence" value="ECO:0007669"/>
    <property type="project" value="InterPro"/>
</dbReference>
<dbReference type="GO" id="GO:0046872">
    <property type="term" value="F:metal ion binding"/>
    <property type="evidence" value="ECO:0007669"/>
    <property type="project" value="UniProtKB-KW"/>
</dbReference>
<dbReference type="GO" id="GO:0017004">
    <property type="term" value="P:cytochrome complex assembly"/>
    <property type="evidence" value="ECO:0007669"/>
    <property type="project" value="UniProtKB-KW"/>
</dbReference>
<dbReference type="Gene3D" id="2.40.50.140">
    <property type="entry name" value="Nucleic acid-binding proteins"/>
    <property type="match status" value="1"/>
</dbReference>
<dbReference type="HAMAP" id="MF_01959">
    <property type="entry name" value="CcmE"/>
    <property type="match status" value="1"/>
</dbReference>
<dbReference type="InterPro" id="IPR004329">
    <property type="entry name" value="CcmE"/>
</dbReference>
<dbReference type="InterPro" id="IPR036127">
    <property type="entry name" value="CcmE-like_sf"/>
</dbReference>
<dbReference type="InterPro" id="IPR012340">
    <property type="entry name" value="NA-bd_OB-fold"/>
</dbReference>
<dbReference type="NCBIfam" id="NF009727">
    <property type="entry name" value="PRK13254.1-1"/>
    <property type="match status" value="1"/>
</dbReference>
<dbReference type="NCBIfam" id="NF009731">
    <property type="entry name" value="PRK13254.1-5"/>
    <property type="match status" value="1"/>
</dbReference>
<dbReference type="PANTHER" id="PTHR34128">
    <property type="entry name" value="CYTOCHROME C-TYPE BIOGENESIS PROTEIN CCME HOMOLOG, MITOCHONDRIAL"/>
    <property type="match status" value="1"/>
</dbReference>
<dbReference type="PANTHER" id="PTHR34128:SF2">
    <property type="entry name" value="CYTOCHROME C-TYPE BIOGENESIS PROTEIN CCME HOMOLOG, MITOCHONDRIAL"/>
    <property type="match status" value="1"/>
</dbReference>
<dbReference type="Pfam" id="PF03100">
    <property type="entry name" value="CcmE"/>
    <property type="match status" value="1"/>
</dbReference>
<dbReference type="SUPFAM" id="SSF82093">
    <property type="entry name" value="Heme chaperone CcmE"/>
    <property type="match status" value="1"/>
</dbReference>
<comment type="function">
    <text evidence="1">Heme chaperone required for the biogenesis of c-type cytochromes. Transiently binds heme delivered by CcmC and transfers the heme to apo-cytochromes in a process facilitated by CcmF and CcmH.</text>
</comment>
<comment type="subcellular location">
    <subcellularLocation>
        <location evidence="1">Cell inner membrane</location>
        <topology evidence="1">Single-pass type II membrane protein</topology>
        <orientation evidence="1">Periplasmic side</orientation>
    </subcellularLocation>
</comment>
<comment type="similarity">
    <text evidence="1">Belongs to the CcmE/CycJ family.</text>
</comment>
<proteinExistence type="inferred from homology"/>
<protein>
    <recommendedName>
        <fullName evidence="1">Cytochrome c-type biogenesis protein CcmE</fullName>
    </recommendedName>
    <alternativeName>
        <fullName evidence="1">Cytochrome c maturation protein E</fullName>
    </alternativeName>
    <alternativeName>
        <fullName evidence="1">Heme chaperone CcmE</fullName>
    </alternativeName>
</protein>
<sequence length="165" mass="17426">MTRKQKRLAIIGGGMSFIVAAVLLVMFAFGQSIAYFYMPADLEKTPVNPGTRIRLGGLVAEGSIKRGEGRTVSFTVTDGEAKVPVSYTGILPDLFREGQGVVTEGMFDAATHGFVADSVLAKHDENYMPKEVADRLKDKGLWQQGAEGAAPAASAASGDKTGATK</sequence>
<feature type="chain" id="PRO_0000238790" description="Cytochrome c-type biogenesis protein CcmE">
    <location>
        <begin position="1"/>
        <end position="165"/>
    </location>
</feature>
<feature type="topological domain" description="Cytoplasmic" evidence="1">
    <location>
        <begin position="1"/>
        <end position="7"/>
    </location>
</feature>
<feature type="transmembrane region" description="Helical; Signal-anchor for type II membrane protein" evidence="1">
    <location>
        <begin position="8"/>
        <end position="28"/>
    </location>
</feature>
<feature type="topological domain" description="Periplasmic" evidence="1">
    <location>
        <begin position="29"/>
        <end position="165"/>
    </location>
</feature>
<feature type="region of interest" description="Disordered" evidence="2">
    <location>
        <begin position="138"/>
        <end position="165"/>
    </location>
</feature>
<feature type="compositionally biased region" description="Low complexity" evidence="2">
    <location>
        <begin position="145"/>
        <end position="158"/>
    </location>
</feature>
<feature type="binding site" description="covalent" evidence="1">
    <location>
        <position position="123"/>
    </location>
    <ligand>
        <name>heme</name>
        <dbReference type="ChEBI" id="CHEBI:30413"/>
    </ligand>
</feature>
<feature type="binding site" description="axial binding residue" evidence="1">
    <location>
        <position position="127"/>
    </location>
    <ligand>
        <name>heme</name>
        <dbReference type="ChEBI" id="CHEBI:30413"/>
    </ligand>
    <ligandPart>
        <name>Fe</name>
        <dbReference type="ChEBI" id="CHEBI:18248"/>
    </ligandPart>
</feature>
<accession>Q8UGR1</accession>
<accession>Q7D085</accession>
<name>CCME_AGRFC</name>
<organism>
    <name type="scientific">Agrobacterium fabrum (strain C58 / ATCC 33970)</name>
    <name type="common">Agrobacterium tumefaciens (strain C58)</name>
    <dbReference type="NCBI Taxonomy" id="176299"/>
    <lineage>
        <taxon>Bacteria</taxon>
        <taxon>Pseudomonadati</taxon>
        <taxon>Pseudomonadota</taxon>
        <taxon>Alphaproteobacteria</taxon>
        <taxon>Hyphomicrobiales</taxon>
        <taxon>Rhizobiaceae</taxon>
        <taxon>Rhizobium/Agrobacterium group</taxon>
        <taxon>Agrobacterium</taxon>
        <taxon>Agrobacterium tumefaciens complex</taxon>
    </lineage>
</organism>
<evidence type="ECO:0000255" key="1">
    <source>
        <dbReference type="HAMAP-Rule" id="MF_01959"/>
    </source>
</evidence>
<evidence type="ECO:0000256" key="2">
    <source>
        <dbReference type="SAM" id="MobiDB-lite"/>
    </source>
</evidence>
<keyword id="KW-0997">Cell inner membrane</keyword>
<keyword id="KW-1003">Cell membrane</keyword>
<keyword id="KW-0201">Cytochrome c-type biogenesis</keyword>
<keyword id="KW-0349">Heme</keyword>
<keyword id="KW-0408">Iron</keyword>
<keyword id="KW-0472">Membrane</keyword>
<keyword id="KW-0479">Metal-binding</keyword>
<keyword id="KW-1185">Reference proteome</keyword>
<keyword id="KW-0735">Signal-anchor</keyword>
<keyword id="KW-0812">Transmembrane</keyword>
<keyword id="KW-1133">Transmembrane helix</keyword>
<gene>
    <name evidence="1" type="primary">ccmE</name>
    <name evidence="1" type="synonym">cycJ</name>
    <name type="ordered locus">Atu0974</name>
    <name type="ORF">AGR_C_1786</name>
</gene>